<proteinExistence type="inferred from homology"/>
<evidence type="ECO:0000255" key="1">
    <source>
        <dbReference type="HAMAP-Rule" id="MF_00274"/>
    </source>
</evidence>
<evidence type="ECO:0000256" key="2">
    <source>
        <dbReference type="SAM" id="MobiDB-lite"/>
    </source>
</evidence>
<reference key="1">
    <citation type="journal article" date="2002" name="Proc. Natl. Acad. Sci. U.S.A.">
        <title>Complete genome sequence and comparative genomic analysis of an emerging human pathogen, serotype V Streptococcus agalactiae.</title>
        <authorList>
            <person name="Tettelin H."/>
            <person name="Masignani V."/>
            <person name="Cieslewicz M.J."/>
            <person name="Eisen J.A."/>
            <person name="Peterson S.N."/>
            <person name="Wessels M.R."/>
            <person name="Paulsen I.T."/>
            <person name="Nelson K.E."/>
            <person name="Margarit I."/>
            <person name="Read T.D."/>
            <person name="Madoff L.C."/>
            <person name="Wolf A.M."/>
            <person name="Beanan M.J."/>
            <person name="Brinkac L.M."/>
            <person name="Daugherty S.C."/>
            <person name="DeBoy R.T."/>
            <person name="Durkin A.S."/>
            <person name="Kolonay J.F."/>
            <person name="Madupu R."/>
            <person name="Lewis M.R."/>
            <person name="Radune D."/>
            <person name="Fedorova N.B."/>
            <person name="Scanlan D."/>
            <person name="Khouri H.M."/>
            <person name="Mulligan S."/>
            <person name="Carty H.A."/>
            <person name="Cline R.T."/>
            <person name="Van Aken S.E."/>
            <person name="Gill J."/>
            <person name="Scarselli M."/>
            <person name="Mora M."/>
            <person name="Iacobini E.T."/>
            <person name="Brettoni C."/>
            <person name="Galli G."/>
            <person name="Mariani M."/>
            <person name="Vegni F."/>
            <person name="Maione D."/>
            <person name="Rinaudo D."/>
            <person name="Rappuoli R."/>
            <person name="Telford J.L."/>
            <person name="Kasper D.L."/>
            <person name="Grandi G."/>
            <person name="Fraser C.M."/>
        </authorList>
    </citation>
    <scope>NUCLEOTIDE SEQUENCE [LARGE SCALE GENOMIC DNA]</scope>
    <source>
        <strain>ATCC BAA-611 / 2603 V/R</strain>
    </source>
</reference>
<organism>
    <name type="scientific">Streptococcus agalactiae serotype V (strain ATCC BAA-611 / 2603 V/R)</name>
    <dbReference type="NCBI Taxonomy" id="208435"/>
    <lineage>
        <taxon>Bacteria</taxon>
        <taxon>Bacillati</taxon>
        <taxon>Bacillota</taxon>
        <taxon>Bacilli</taxon>
        <taxon>Lactobacillales</taxon>
        <taxon>Streptococcaceae</taxon>
        <taxon>Streptococcus</taxon>
    </lineage>
</organism>
<comment type="function">
    <text evidence="1">Binds to DNA and alters its conformation. May be involved in regulation of gene expression, nucleoid organization and DNA protection.</text>
</comment>
<comment type="subunit">
    <text evidence="1">Homodimer.</text>
</comment>
<comment type="subcellular location">
    <subcellularLocation>
        <location evidence="1">Cytoplasm</location>
        <location evidence="1">Nucleoid</location>
    </subcellularLocation>
</comment>
<comment type="similarity">
    <text evidence="1">Belongs to the YbaB/EbfC family.</text>
</comment>
<feature type="chain" id="PRO_0000170444" description="Nucleoid-associated protein SAG1747">
    <location>
        <begin position="1"/>
        <end position="99"/>
    </location>
</feature>
<feature type="region of interest" description="Disordered" evidence="2">
    <location>
        <begin position="1"/>
        <end position="20"/>
    </location>
</feature>
<feature type="compositionally biased region" description="Low complexity" evidence="2">
    <location>
        <begin position="1"/>
        <end position="10"/>
    </location>
</feature>
<keyword id="KW-0963">Cytoplasm</keyword>
<keyword id="KW-0238">DNA-binding</keyword>
<keyword id="KW-1185">Reference proteome</keyword>
<protein>
    <recommendedName>
        <fullName evidence="1">Nucleoid-associated protein SAG1747</fullName>
    </recommendedName>
</protein>
<name>Y1747_STRA5</name>
<accession>P67265</accession>
<accession>Q8DXU9</accession>
<accession>Q8E3G8</accession>
<dbReference type="EMBL" id="AE009948">
    <property type="protein sequence ID" value="AAN00610.1"/>
    <property type="molecule type" value="Genomic_DNA"/>
</dbReference>
<dbReference type="RefSeq" id="NP_688737.1">
    <property type="nucleotide sequence ID" value="NC_004116.1"/>
</dbReference>
<dbReference type="RefSeq" id="WP_000981511.1">
    <property type="nucleotide sequence ID" value="NC_004116.1"/>
</dbReference>
<dbReference type="SMR" id="P67265"/>
<dbReference type="STRING" id="208435.SAG1747"/>
<dbReference type="KEGG" id="sag:SAG1747"/>
<dbReference type="PATRIC" id="fig|208435.3.peg.1754"/>
<dbReference type="HOGENOM" id="CLU_140930_1_1_9"/>
<dbReference type="OrthoDB" id="9795263at2"/>
<dbReference type="Proteomes" id="UP000000821">
    <property type="component" value="Chromosome"/>
</dbReference>
<dbReference type="GO" id="GO:0043590">
    <property type="term" value="C:bacterial nucleoid"/>
    <property type="evidence" value="ECO:0007669"/>
    <property type="project" value="UniProtKB-UniRule"/>
</dbReference>
<dbReference type="GO" id="GO:0005829">
    <property type="term" value="C:cytosol"/>
    <property type="evidence" value="ECO:0007669"/>
    <property type="project" value="TreeGrafter"/>
</dbReference>
<dbReference type="GO" id="GO:0003677">
    <property type="term" value="F:DNA binding"/>
    <property type="evidence" value="ECO:0007669"/>
    <property type="project" value="UniProtKB-UniRule"/>
</dbReference>
<dbReference type="Gene3D" id="3.30.1310.10">
    <property type="entry name" value="Nucleoid-associated protein YbaB-like domain"/>
    <property type="match status" value="1"/>
</dbReference>
<dbReference type="HAMAP" id="MF_00274">
    <property type="entry name" value="DNA_YbaB_EbfC"/>
    <property type="match status" value="1"/>
</dbReference>
<dbReference type="InterPro" id="IPR036894">
    <property type="entry name" value="YbaB-like_sf"/>
</dbReference>
<dbReference type="InterPro" id="IPR004401">
    <property type="entry name" value="YbaB/EbfC"/>
</dbReference>
<dbReference type="NCBIfam" id="TIGR00103">
    <property type="entry name" value="DNA_YbaB_EbfC"/>
    <property type="match status" value="1"/>
</dbReference>
<dbReference type="PANTHER" id="PTHR33449">
    <property type="entry name" value="NUCLEOID-ASSOCIATED PROTEIN YBAB"/>
    <property type="match status" value="1"/>
</dbReference>
<dbReference type="PANTHER" id="PTHR33449:SF1">
    <property type="entry name" value="NUCLEOID-ASSOCIATED PROTEIN YBAB"/>
    <property type="match status" value="1"/>
</dbReference>
<dbReference type="Pfam" id="PF02575">
    <property type="entry name" value="YbaB_DNA_bd"/>
    <property type="match status" value="1"/>
</dbReference>
<dbReference type="PIRSF" id="PIRSF004555">
    <property type="entry name" value="UCP004555"/>
    <property type="match status" value="1"/>
</dbReference>
<dbReference type="SUPFAM" id="SSF82607">
    <property type="entry name" value="YbaB-like"/>
    <property type="match status" value="1"/>
</dbReference>
<sequence>MMNMQNMMRQAQKLQKQMEQKQADLAASQFTGKSAQELVTVTFTGDKKLISIDYKEAVVDPEDIETLQDMTTQAINDALSQVDDATKKIMGAFAGKMPF</sequence>
<gene>
    <name type="ordered locus">SAG1747</name>
</gene>